<keyword id="KW-0002">3D-structure</keyword>
<keyword id="KW-1157">Cap snatching</keyword>
<keyword id="KW-0255">Endonuclease</keyword>
<keyword id="KW-1262">Eukaryotic host gene expression shutoff by virus</keyword>
<keyword id="KW-1191">Eukaryotic host transcription shutoff by virus</keyword>
<keyword id="KW-1035">Host cytoplasm</keyword>
<keyword id="KW-1190">Host gene expression shutoff by virus</keyword>
<keyword id="KW-1048">Host nucleus</keyword>
<keyword id="KW-0945">Host-virus interaction</keyword>
<keyword id="KW-0378">Hydrolase</keyword>
<keyword id="KW-1104">Inhibition of host RNA polymerase II by virus</keyword>
<keyword id="KW-0464">Manganese</keyword>
<keyword id="KW-0479">Metal-binding</keyword>
<keyword id="KW-0540">Nuclease</keyword>
<keyword id="KW-0597">Phosphoprotein</keyword>
<keyword id="KW-1185">Reference proteome</keyword>
<keyword id="KW-0688">Ribosomal frameshifting</keyword>
<name>PA_I96A0</name>
<gene>
    <name evidence="2" type="primary">PA</name>
</gene>
<sequence length="716" mass="82673">MEDFVRQCFNPMIVELAEKAMKEYGEDPKIETNKFAAICTHLEVCFMYSDFHFIDERGESTIIESGDPNALLKHRFEIIEGRDRTMAWTVVNSICNTTGVEKPKFLPDLYDYKENRFIEIGVTRREVHTYYLEKANKIKSEKTHIHIFSFTGEEMATKADYTLDEESRARIKTRLFTIRQEMASRGLWDSFRQSERGEETVEERFEITGTMCRLADQSLPPNFSSLEKFRAYVDGFEPNGCIEGKLSQMSKEVNARIEPFLKTTPRPLRLPDGPPCSQRSKFLLMDALKLSIEDPSHEGEGIPLYDAIKCMKTFFGWKEPNIVKPHEKGINPNYLLAWKQVLAELQDIENEEKIPKTKNMRKTSQLKWALGENMAPEKVDFEDCKDVSDLRQYDSDEPKPRSLASWIQSEFNKACELTDSSWIELDEIGEDVAPIEHIASMRRNYFTAEVSHCRATEYIMKGVYINTALLNASCAAMDDFQLIPMISKCRTKEGRRKTNLYGFLIKGRSHLRNDTDVVNFVSMEFSLTDPRLEPHRWEKYCVLRIGDMLLRTEIGQVSRPMFLYVRTNGTSKIKMKWGMEMRRCPFQSLQQIESMIEAESSVKEKDMTKEFFENKSETWPIGESPKGVEEGSIGKVCRTLLAKSVFNSLYASPQLEGFSAESRKLLLIVQALRDNLEPGTFDLGGLYEAIEECLINDPWVLLNASWFNSFLTHALR</sequence>
<proteinExistence type="evidence at protein level"/>
<feature type="chain" id="PRO_0000279246" description="Polymerase acidic protein">
    <location>
        <begin position="1"/>
        <end position="716"/>
    </location>
</feature>
<feature type="short sequence motif" description="Nuclear localization signal 1 (NLS1)" evidence="1 2">
    <location>
        <begin position="124"/>
        <end position="139"/>
    </location>
</feature>
<feature type="short sequence motif" description="Nuclear localization signal 2 (NLS2)" evidence="1 2">
    <location>
        <begin position="184"/>
        <end position="247"/>
    </location>
</feature>
<feature type="binding site" evidence="2">
    <location>
        <position position="41"/>
    </location>
    <ligand>
        <name>Mn(2+)</name>
        <dbReference type="ChEBI" id="CHEBI:29035"/>
        <label>1</label>
    </ligand>
</feature>
<feature type="binding site" evidence="2">
    <location>
        <position position="80"/>
    </location>
    <ligand>
        <name>Mn(2+)</name>
        <dbReference type="ChEBI" id="CHEBI:29035"/>
        <label>2</label>
    </ligand>
</feature>
<feature type="binding site" evidence="2">
    <location>
        <position position="108"/>
    </location>
    <ligand>
        <name>Mn(2+)</name>
        <dbReference type="ChEBI" id="CHEBI:29035"/>
        <label>1</label>
    </ligand>
</feature>
<feature type="binding site" evidence="2">
    <location>
        <position position="108"/>
    </location>
    <ligand>
        <name>Mn(2+)</name>
        <dbReference type="ChEBI" id="CHEBI:29035"/>
        <label>2</label>
    </ligand>
</feature>
<feature type="binding site" evidence="2">
    <location>
        <position position="119"/>
    </location>
    <ligand>
        <name>Mn(2+)</name>
        <dbReference type="ChEBI" id="CHEBI:29035"/>
        <label>1</label>
    </ligand>
</feature>
<feature type="binding site" evidence="2">
    <location>
        <position position="120"/>
    </location>
    <ligand>
        <name>Mn(2+)</name>
        <dbReference type="ChEBI" id="CHEBI:29035"/>
        <label>1</label>
    </ligand>
</feature>
<feature type="helix" evidence="3">
    <location>
        <begin position="1"/>
        <end position="8"/>
    </location>
</feature>
<feature type="helix" evidence="3">
    <location>
        <begin position="11"/>
        <end position="23"/>
    </location>
</feature>
<feature type="turn" evidence="3">
    <location>
        <begin position="28"/>
        <end position="30"/>
    </location>
</feature>
<feature type="helix" evidence="3">
    <location>
        <begin position="32"/>
        <end position="48"/>
    </location>
</feature>
<feature type="strand" evidence="3">
    <location>
        <begin position="76"/>
        <end position="78"/>
    </location>
</feature>
<feature type="helix" evidence="3">
    <location>
        <begin position="84"/>
        <end position="97"/>
    </location>
</feature>
<feature type="strand" evidence="3">
    <location>
        <begin position="108"/>
        <end position="111"/>
    </location>
</feature>
<feature type="turn" evidence="3">
    <location>
        <begin position="112"/>
        <end position="115"/>
    </location>
</feature>
<feature type="strand" evidence="3">
    <location>
        <begin position="116"/>
        <end position="125"/>
    </location>
</feature>
<feature type="helix" evidence="3">
    <location>
        <begin position="127"/>
        <end position="138"/>
    </location>
</feature>
<feature type="strand" evidence="3">
    <location>
        <begin position="144"/>
        <end position="149"/>
    </location>
</feature>
<feature type="strand" evidence="3">
    <location>
        <begin position="154"/>
        <end position="156"/>
    </location>
</feature>
<feature type="helix" evidence="3">
    <location>
        <begin position="157"/>
        <end position="159"/>
    </location>
</feature>
<feature type="helix" evidence="3">
    <location>
        <begin position="165"/>
        <end position="184"/>
    </location>
</feature>
<feature type="helix" evidence="3">
    <location>
        <begin position="188"/>
        <end position="193"/>
    </location>
</feature>
<evidence type="ECO:0000250" key="1">
    <source>
        <dbReference type="UniProtKB" id="P03433"/>
    </source>
</evidence>
<evidence type="ECO:0000255" key="2">
    <source>
        <dbReference type="HAMAP-Rule" id="MF_04063"/>
    </source>
</evidence>
<evidence type="ECO:0007829" key="3">
    <source>
        <dbReference type="PDB" id="3HW5"/>
    </source>
</evidence>
<protein>
    <recommendedName>
        <fullName evidence="2">Polymerase acidic protein</fullName>
        <ecNumber evidence="2">3.1.-.-</ecNumber>
    </recommendedName>
    <alternativeName>
        <fullName evidence="2">RNA-directed RNA polymerase subunit P2</fullName>
    </alternativeName>
</protein>
<reference key="1">
    <citation type="journal article" date="1999" name="Virology">
        <title>Genetic characterization of the pathogenic influenza A/Goose/Guangdong/1/96 (H5N1) virus: similarity of its hemagglutinin gene to those of H5N1 viruses from the 1997 outbreaks in Hong Kong.</title>
        <authorList>
            <person name="Xu X."/>
            <person name="Subbarao K."/>
            <person name="Cox N.J."/>
            <person name="Guo Y."/>
        </authorList>
    </citation>
    <scope>NUCLEOTIDE SEQUENCE [GENOMIC RNA]</scope>
</reference>
<reference key="2">
    <citation type="journal article" date="2009" name="Nature">
        <title>Crystal structure of an avian influenza polymerase PA(N) reveals an endonuclease active site.</title>
        <authorList>
            <person name="Yuan P."/>
            <person name="Bartlam M."/>
            <person name="Lou Z."/>
            <person name="Chen S."/>
            <person name="Zhou J."/>
            <person name="He X."/>
            <person name="Lv Z."/>
            <person name="Ge R."/>
            <person name="Li X."/>
            <person name="Deng T."/>
            <person name="Fodor E."/>
            <person name="Rao Z."/>
            <person name="Liu Y."/>
        </authorList>
    </citation>
    <scope>X-RAY CRYSTALLOGRAPHY (2.2 ANGSTROMS) OF 1-256</scope>
</reference>
<comment type="function">
    <text evidence="2">Plays an essential role in viral RNA transcription and replication by forming the heterotrimeric polymerase complex together with PB1 and PB2 subunits. The complex transcribes viral mRNAs by using a unique mechanism called cap-snatching. It consists in the hijacking and cleavage of host capped pre-mRNAs. These short capped RNAs are then used as primers for viral mRNAs. The PB2 subunit is responsible for the binding of the 5' cap of cellular pre-mRNAs which are subsequently cleaved after 10-13 nucleotides by the PA subunit that carries the endonuclease activity.</text>
</comment>
<comment type="cofactor">
    <cofactor evidence="2">
        <name>Mn(2+)</name>
        <dbReference type="ChEBI" id="CHEBI:29035"/>
    </cofactor>
    <text evidence="2">Binds 2 manganese ions per subunit.</text>
</comment>
<comment type="subunit">
    <text evidence="1 2">Influenza RNA polymerase is composed of three subunits: PB1, PB2 and PA. Interacts (via C-terminus) with PB1 (via N-terminus).</text>
</comment>
<comment type="interaction">
    <interactant intactId="EBI-15715136">
        <id>Q9Q0U9</id>
    </interactant>
    <interactant intactId="EBI-8290908">
        <id>Q9Q0V0</id>
        <label>PB1</label>
    </interactant>
    <organismsDiffer>false</organismsDiffer>
    <experiments>3</experiments>
</comment>
<comment type="subcellular location">
    <subcellularLocation>
        <location evidence="2">Host cytoplasm</location>
    </subcellularLocation>
    <subcellularLocation>
        <location evidence="2">Host nucleus</location>
    </subcellularLocation>
    <text evidence="1 2">PB1 and PA are transported in the host nucleus as a complex.</text>
</comment>
<comment type="alternative products">
    <event type="ribosomal frameshifting"/>
    <isoform>
        <id>Q9Q0U9-1</id>
        <name>PA</name>
        <sequence type="displayed"/>
    </isoform>
    <isoform>
        <id>P0CK63-1</id>
        <name>PA-X</name>
        <sequence type="external"/>
    </isoform>
</comment>
<comment type="PTM">
    <text evidence="1 2">Phosphorylated on serines and threonines by host kinases, including human casein kinase II.</text>
</comment>
<comment type="similarity">
    <text evidence="2">Belongs to the influenza viruses PA family.</text>
</comment>
<organism>
    <name type="scientific">Influenza A virus (strain A/Goose/Guangdong/1/1996 H5N1 genotype Gs/Gd)</name>
    <dbReference type="NCBI Taxonomy" id="93838"/>
    <lineage>
        <taxon>Viruses</taxon>
        <taxon>Riboviria</taxon>
        <taxon>Orthornavirae</taxon>
        <taxon>Negarnaviricota</taxon>
        <taxon>Polyploviricotina</taxon>
        <taxon>Insthoviricetes</taxon>
        <taxon>Articulavirales</taxon>
        <taxon>Orthomyxoviridae</taxon>
        <taxon>Alphainfluenzavirus</taxon>
        <taxon>Alphainfluenzavirus influenzae</taxon>
        <taxon>Influenza A virus</taxon>
    </lineage>
</organism>
<accession>Q9Q0U9</accession>
<organismHost>
    <name type="scientific">Aves</name>
    <dbReference type="NCBI Taxonomy" id="8782"/>
</organismHost>
<organismHost>
    <name type="scientific">Felis catus</name>
    <name type="common">Cat</name>
    <name type="synonym">Felis silvestris catus</name>
    <dbReference type="NCBI Taxonomy" id="9685"/>
</organismHost>
<organismHost>
    <name type="scientific">Homo sapiens</name>
    <name type="common">Human</name>
    <dbReference type="NCBI Taxonomy" id="9606"/>
</organismHost>
<organismHost>
    <name type="scientific">Panthera pardus</name>
    <name type="common">Leopard</name>
    <name type="synonym">Felis pardus</name>
    <dbReference type="NCBI Taxonomy" id="9691"/>
</organismHost>
<organismHost>
    <name type="scientific">Panthera tigris</name>
    <name type="common">Tiger</name>
    <dbReference type="NCBI Taxonomy" id="9694"/>
</organismHost>
<organismHost>
    <name type="scientific">Sus scrofa</name>
    <name type="common">Pig</name>
    <dbReference type="NCBI Taxonomy" id="9823"/>
</organismHost>
<dbReference type="EC" id="3.1.-.-" evidence="2"/>
<dbReference type="EMBL" id="AF144302">
    <property type="protein sequence ID" value="AAD51924.1"/>
    <property type="molecule type" value="Genomic_RNA"/>
</dbReference>
<dbReference type="RefSeq" id="YP_308666.1">
    <molecule id="Q9Q0U9-1"/>
    <property type="nucleotide sequence ID" value="NC_007359.1"/>
</dbReference>
<dbReference type="PDB" id="3EBJ">
    <property type="method" value="X-ray"/>
    <property type="resolution" value="2.20 A"/>
    <property type="chains" value="A/B/C/D=1-256"/>
</dbReference>
<dbReference type="PDB" id="3HW3">
    <property type="method" value="X-ray"/>
    <property type="resolution" value="1.90 A"/>
    <property type="chains" value="A/B/C/D=1-256"/>
</dbReference>
<dbReference type="PDB" id="3HW4">
    <property type="method" value="X-ray"/>
    <property type="resolution" value="1.90 A"/>
    <property type="chains" value="A/B/C/D=1-256"/>
</dbReference>
<dbReference type="PDB" id="3HW5">
    <property type="method" value="X-ray"/>
    <property type="resolution" value="1.81 A"/>
    <property type="chains" value="A/B/C/D=1-256"/>
</dbReference>
<dbReference type="PDB" id="3HW6">
    <property type="method" value="X-ray"/>
    <property type="resolution" value="2.50 A"/>
    <property type="chains" value="A/B/C/D=1-256"/>
</dbReference>
<dbReference type="PDB" id="8H69">
    <property type="method" value="EM"/>
    <property type="resolution" value="3.70 A"/>
    <property type="chains" value="A=1-716"/>
</dbReference>
<dbReference type="PDB" id="8KCV">
    <property type="method" value="X-ray"/>
    <property type="resolution" value="2.39 A"/>
    <property type="chains" value="C/F=474-482"/>
</dbReference>
<dbReference type="PDBsum" id="3EBJ"/>
<dbReference type="PDBsum" id="3HW3"/>
<dbReference type="PDBsum" id="3HW4"/>
<dbReference type="PDBsum" id="3HW5"/>
<dbReference type="PDBsum" id="3HW6"/>
<dbReference type="PDBsum" id="8H69"/>
<dbReference type="PDBsum" id="8KCV"/>
<dbReference type="SMR" id="Q9Q0U9"/>
<dbReference type="DIP" id="DIP-59837N"/>
<dbReference type="IntAct" id="Q9Q0U9">
    <property type="interactions" value="1"/>
</dbReference>
<dbReference type="MEROPS" id="S62.001"/>
<dbReference type="GeneID" id="3654617"/>
<dbReference type="KEGG" id="vg:3654617"/>
<dbReference type="OrthoDB" id="495at10239"/>
<dbReference type="EvolutionaryTrace" id="Q9Q0U9"/>
<dbReference type="Proteomes" id="UP000131152">
    <property type="component" value="Genome"/>
</dbReference>
<dbReference type="GO" id="GO:0030430">
    <property type="term" value="C:host cell cytoplasm"/>
    <property type="evidence" value="ECO:0007669"/>
    <property type="project" value="UniProtKB-SubCell"/>
</dbReference>
<dbReference type="GO" id="GO:0042025">
    <property type="term" value="C:host cell nucleus"/>
    <property type="evidence" value="ECO:0007669"/>
    <property type="project" value="UniProtKB-SubCell"/>
</dbReference>
<dbReference type="GO" id="GO:0004519">
    <property type="term" value="F:endonuclease activity"/>
    <property type="evidence" value="ECO:0007669"/>
    <property type="project" value="UniProtKB-KW"/>
</dbReference>
<dbReference type="GO" id="GO:0046872">
    <property type="term" value="F:metal ion binding"/>
    <property type="evidence" value="ECO:0007669"/>
    <property type="project" value="UniProtKB-KW"/>
</dbReference>
<dbReference type="GO" id="GO:0003723">
    <property type="term" value="F:RNA binding"/>
    <property type="evidence" value="ECO:0007669"/>
    <property type="project" value="UniProtKB-UniRule"/>
</dbReference>
<dbReference type="GO" id="GO:0075526">
    <property type="term" value="P:cap snatching"/>
    <property type="evidence" value="ECO:0007669"/>
    <property type="project" value="UniProtKB-UniRule"/>
</dbReference>
<dbReference type="GO" id="GO:0006351">
    <property type="term" value="P:DNA-templated transcription"/>
    <property type="evidence" value="ECO:0007669"/>
    <property type="project" value="UniProtKB-UniRule"/>
</dbReference>
<dbReference type="GO" id="GO:0039657">
    <property type="term" value="P:symbiont-mediated suppression of host gene expression"/>
    <property type="evidence" value="ECO:0007669"/>
    <property type="project" value="UniProtKB-KW"/>
</dbReference>
<dbReference type="GO" id="GO:0039523">
    <property type="term" value="P:symbiont-mediated suppression of host mRNA transcription via inhibition of RNA polymerase II activity"/>
    <property type="evidence" value="ECO:0007669"/>
    <property type="project" value="UniProtKB-UniRule"/>
</dbReference>
<dbReference type="GO" id="GO:0039694">
    <property type="term" value="P:viral RNA genome replication"/>
    <property type="evidence" value="ECO:0007669"/>
    <property type="project" value="InterPro"/>
</dbReference>
<dbReference type="GO" id="GO:0075523">
    <property type="term" value="P:viral translational frameshifting"/>
    <property type="evidence" value="ECO:0007669"/>
    <property type="project" value="UniProtKB-KW"/>
</dbReference>
<dbReference type="FunFam" id="3.40.91.90:FF:000001">
    <property type="entry name" value="Polymerase acidic protein"/>
    <property type="match status" value="1"/>
</dbReference>
<dbReference type="Gene3D" id="3.40.91.90">
    <property type="entry name" value="Influenza RNA-dependent RNA polymerase subunit PA, endonuclease domain"/>
    <property type="match status" value="1"/>
</dbReference>
<dbReference type="HAMAP" id="MF_04063">
    <property type="entry name" value="INFV_PA"/>
    <property type="match status" value="1"/>
</dbReference>
<dbReference type="InterPro" id="IPR037534">
    <property type="entry name" value="INFV_PA"/>
</dbReference>
<dbReference type="InterPro" id="IPR001009">
    <property type="entry name" value="PA/PA-X"/>
</dbReference>
<dbReference type="InterPro" id="IPR038372">
    <property type="entry name" value="PA/PA-X_sf"/>
</dbReference>
<dbReference type="Pfam" id="PF00603">
    <property type="entry name" value="Flu_PA"/>
    <property type="match status" value="1"/>
</dbReference>